<sequence length="398" mass="42761">MKQLTILGSTGSIGVSSLAVIKANPDKFTVRALSAGYNVKLMLEQCLTFQPTYASMADEASATALRQQLAEYGCKTEVLAGVQAACELAALDGVDQVMAAIVGAAGLLPTLAAIHAGKQVLLANKESLVTCGRLFMDAVEQSDAQLLPIDSEHNAIFQSLPEQIQRQLGYASLSKHGVERIILTGSGGPFRETPVSALADMTPDQACAHPNWSMGRKISVDSATMMNKGLEYIEARWLFNASAEQMEVIIHPQSVIHSMVRYRDGSVLAQLGSPDMRTPIAHAMAYPERVASGAKALDFCQIGALTFLAPDYARYPCLQLAIDACNHGQSATTTLNAANEIAVAAFLQSQIRFTDIAAVNQHVIEQLTLPEPTSVDDVLFIDSWARQVAAQTLTHYVR</sequence>
<reference key="1">
    <citation type="journal article" date="2004" name="Proc. Natl. Acad. Sci. U.S.A.">
        <title>Genome sequence of the enterobacterial phytopathogen Erwinia carotovora subsp. atroseptica and characterization of virulence factors.</title>
        <authorList>
            <person name="Bell K.S."/>
            <person name="Sebaihia M."/>
            <person name="Pritchard L."/>
            <person name="Holden M.T.G."/>
            <person name="Hyman L.J."/>
            <person name="Holeva M.C."/>
            <person name="Thomson N.R."/>
            <person name="Bentley S.D."/>
            <person name="Churcher L.J.C."/>
            <person name="Mungall K."/>
            <person name="Atkin R."/>
            <person name="Bason N."/>
            <person name="Brooks K."/>
            <person name="Chillingworth T."/>
            <person name="Clark K."/>
            <person name="Doggett J."/>
            <person name="Fraser A."/>
            <person name="Hance Z."/>
            <person name="Hauser H."/>
            <person name="Jagels K."/>
            <person name="Moule S."/>
            <person name="Norbertczak H."/>
            <person name="Ormond D."/>
            <person name="Price C."/>
            <person name="Quail M.A."/>
            <person name="Sanders M."/>
            <person name="Walker D."/>
            <person name="Whitehead S."/>
            <person name="Salmond G.P.C."/>
            <person name="Birch P.R.J."/>
            <person name="Parkhill J."/>
            <person name="Toth I.K."/>
        </authorList>
    </citation>
    <scope>NUCLEOTIDE SEQUENCE [LARGE SCALE GENOMIC DNA]</scope>
    <source>
        <strain>SCRI 1043 / ATCC BAA-672</strain>
    </source>
</reference>
<dbReference type="EC" id="1.1.1.267" evidence="1"/>
<dbReference type="EMBL" id="BX950851">
    <property type="protein sequence ID" value="CAG73946.1"/>
    <property type="molecule type" value="Genomic_DNA"/>
</dbReference>
<dbReference type="SMR" id="Q6D8D9"/>
<dbReference type="STRING" id="218491.ECA1035"/>
<dbReference type="KEGG" id="eca:ECA1035"/>
<dbReference type="PATRIC" id="fig|218491.5.peg.1043"/>
<dbReference type="eggNOG" id="COG0743">
    <property type="taxonomic scope" value="Bacteria"/>
</dbReference>
<dbReference type="HOGENOM" id="CLU_035714_0_1_6"/>
<dbReference type="OrthoDB" id="9806546at2"/>
<dbReference type="UniPathway" id="UPA00056">
    <property type="reaction ID" value="UER00092"/>
</dbReference>
<dbReference type="Proteomes" id="UP000007966">
    <property type="component" value="Chromosome"/>
</dbReference>
<dbReference type="GO" id="GO:0030604">
    <property type="term" value="F:1-deoxy-D-xylulose-5-phosphate reductoisomerase activity"/>
    <property type="evidence" value="ECO:0007669"/>
    <property type="project" value="UniProtKB-UniRule"/>
</dbReference>
<dbReference type="GO" id="GO:0030145">
    <property type="term" value="F:manganese ion binding"/>
    <property type="evidence" value="ECO:0007669"/>
    <property type="project" value="TreeGrafter"/>
</dbReference>
<dbReference type="GO" id="GO:0070402">
    <property type="term" value="F:NADPH binding"/>
    <property type="evidence" value="ECO:0007669"/>
    <property type="project" value="InterPro"/>
</dbReference>
<dbReference type="GO" id="GO:0051484">
    <property type="term" value="P:isopentenyl diphosphate biosynthetic process, methylerythritol 4-phosphate pathway involved in terpenoid biosynthetic process"/>
    <property type="evidence" value="ECO:0007669"/>
    <property type="project" value="TreeGrafter"/>
</dbReference>
<dbReference type="FunFam" id="1.10.1740.10:FF:000004">
    <property type="entry name" value="1-deoxy-D-xylulose 5-phosphate reductoisomerase"/>
    <property type="match status" value="1"/>
</dbReference>
<dbReference type="FunFam" id="3.40.50.720:FF:000045">
    <property type="entry name" value="1-deoxy-D-xylulose 5-phosphate reductoisomerase"/>
    <property type="match status" value="1"/>
</dbReference>
<dbReference type="Gene3D" id="1.10.1740.10">
    <property type="match status" value="1"/>
</dbReference>
<dbReference type="Gene3D" id="3.40.50.720">
    <property type="entry name" value="NAD(P)-binding Rossmann-like Domain"/>
    <property type="match status" value="1"/>
</dbReference>
<dbReference type="HAMAP" id="MF_00183">
    <property type="entry name" value="DXP_reductoisom"/>
    <property type="match status" value="1"/>
</dbReference>
<dbReference type="InterPro" id="IPR003821">
    <property type="entry name" value="DXP_reductoisomerase"/>
</dbReference>
<dbReference type="InterPro" id="IPR013644">
    <property type="entry name" value="DXP_reductoisomerase_C"/>
</dbReference>
<dbReference type="InterPro" id="IPR013512">
    <property type="entry name" value="DXP_reductoisomerase_N"/>
</dbReference>
<dbReference type="InterPro" id="IPR026877">
    <property type="entry name" value="DXPR_C"/>
</dbReference>
<dbReference type="InterPro" id="IPR036169">
    <property type="entry name" value="DXPR_C_sf"/>
</dbReference>
<dbReference type="InterPro" id="IPR036291">
    <property type="entry name" value="NAD(P)-bd_dom_sf"/>
</dbReference>
<dbReference type="NCBIfam" id="TIGR00243">
    <property type="entry name" value="Dxr"/>
    <property type="match status" value="1"/>
</dbReference>
<dbReference type="NCBIfam" id="NF003938">
    <property type="entry name" value="PRK05447.1-1"/>
    <property type="match status" value="1"/>
</dbReference>
<dbReference type="NCBIfam" id="NF009114">
    <property type="entry name" value="PRK12464.1"/>
    <property type="match status" value="1"/>
</dbReference>
<dbReference type="PANTHER" id="PTHR30525">
    <property type="entry name" value="1-DEOXY-D-XYLULOSE 5-PHOSPHATE REDUCTOISOMERASE"/>
    <property type="match status" value="1"/>
</dbReference>
<dbReference type="PANTHER" id="PTHR30525:SF0">
    <property type="entry name" value="1-DEOXY-D-XYLULOSE 5-PHOSPHATE REDUCTOISOMERASE, CHLOROPLASTIC"/>
    <property type="match status" value="1"/>
</dbReference>
<dbReference type="Pfam" id="PF08436">
    <property type="entry name" value="DXP_redisom_C"/>
    <property type="match status" value="1"/>
</dbReference>
<dbReference type="Pfam" id="PF02670">
    <property type="entry name" value="DXP_reductoisom"/>
    <property type="match status" value="1"/>
</dbReference>
<dbReference type="Pfam" id="PF13288">
    <property type="entry name" value="DXPR_C"/>
    <property type="match status" value="1"/>
</dbReference>
<dbReference type="PIRSF" id="PIRSF006205">
    <property type="entry name" value="Dxp_reductismrs"/>
    <property type="match status" value="1"/>
</dbReference>
<dbReference type="SUPFAM" id="SSF69055">
    <property type="entry name" value="1-deoxy-D-xylulose-5-phosphate reductoisomerase, C-terminal domain"/>
    <property type="match status" value="1"/>
</dbReference>
<dbReference type="SUPFAM" id="SSF55347">
    <property type="entry name" value="Glyceraldehyde-3-phosphate dehydrogenase-like, C-terminal domain"/>
    <property type="match status" value="1"/>
</dbReference>
<dbReference type="SUPFAM" id="SSF51735">
    <property type="entry name" value="NAD(P)-binding Rossmann-fold domains"/>
    <property type="match status" value="1"/>
</dbReference>
<name>DXR_PECAS</name>
<comment type="function">
    <text evidence="1">Catalyzes the NADPH-dependent rearrangement and reduction of 1-deoxy-D-xylulose-5-phosphate (DXP) to 2-C-methyl-D-erythritol 4-phosphate (MEP).</text>
</comment>
<comment type="catalytic activity">
    <reaction evidence="1">
        <text>2-C-methyl-D-erythritol 4-phosphate + NADP(+) = 1-deoxy-D-xylulose 5-phosphate + NADPH + H(+)</text>
        <dbReference type="Rhea" id="RHEA:13717"/>
        <dbReference type="ChEBI" id="CHEBI:15378"/>
        <dbReference type="ChEBI" id="CHEBI:57783"/>
        <dbReference type="ChEBI" id="CHEBI:57792"/>
        <dbReference type="ChEBI" id="CHEBI:58262"/>
        <dbReference type="ChEBI" id="CHEBI:58349"/>
        <dbReference type="EC" id="1.1.1.267"/>
    </reaction>
    <physiologicalReaction direction="right-to-left" evidence="1">
        <dbReference type="Rhea" id="RHEA:13719"/>
    </physiologicalReaction>
</comment>
<comment type="cofactor">
    <cofactor evidence="1">
        <name>Mg(2+)</name>
        <dbReference type="ChEBI" id="CHEBI:18420"/>
    </cofactor>
    <cofactor evidence="1">
        <name>Mn(2+)</name>
        <dbReference type="ChEBI" id="CHEBI:29035"/>
    </cofactor>
</comment>
<comment type="pathway">
    <text evidence="1">Isoprenoid biosynthesis; isopentenyl diphosphate biosynthesis via DXP pathway; isopentenyl diphosphate from 1-deoxy-D-xylulose 5-phosphate: step 1/6.</text>
</comment>
<comment type="subunit">
    <text evidence="1">Homodimer.</text>
</comment>
<comment type="similarity">
    <text evidence="1">Belongs to the DXR family.</text>
</comment>
<gene>
    <name evidence="1" type="primary">dxr</name>
    <name type="ordered locus">ECA1035</name>
</gene>
<keyword id="KW-0414">Isoprene biosynthesis</keyword>
<keyword id="KW-0464">Manganese</keyword>
<keyword id="KW-0479">Metal-binding</keyword>
<keyword id="KW-0521">NADP</keyword>
<keyword id="KW-0560">Oxidoreductase</keyword>
<keyword id="KW-1185">Reference proteome</keyword>
<organism>
    <name type="scientific">Pectobacterium atrosepticum (strain SCRI 1043 / ATCC BAA-672)</name>
    <name type="common">Erwinia carotovora subsp. atroseptica</name>
    <dbReference type="NCBI Taxonomy" id="218491"/>
    <lineage>
        <taxon>Bacteria</taxon>
        <taxon>Pseudomonadati</taxon>
        <taxon>Pseudomonadota</taxon>
        <taxon>Gammaproteobacteria</taxon>
        <taxon>Enterobacterales</taxon>
        <taxon>Pectobacteriaceae</taxon>
        <taxon>Pectobacterium</taxon>
    </lineage>
</organism>
<protein>
    <recommendedName>
        <fullName evidence="1">1-deoxy-D-xylulose 5-phosphate reductoisomerase</fullName>
        <shortName evidence="1">DXP reductoisomerase</shortName>
        <ecNumber evidence="1">1.1.1.267</ecNumber>
    </recommendedName>
    <alternativeName>
        <fullName evidence="1">1-deoxyxylulose-5-phosphate reductoisomerase</fullName>
    </alternativeName>
    <alternativeName>
        <fullName evidence="1">2-C-methyl-D-erythritol 4-phosphate synthase</fullName>
    </alternativeName>
</protein>
<accession>Q6D8D9</accession>
<evidence type="ECO:0000255" key="1">
    <source>
        <dbReference type="HAMAP-Rule" id="MF_00183"/>
    </source>
</evidence>
<proteinExistence type="inferred from homology"/>
<feature type="chain" id="PRO_0000163650" description="1-deoxy-D-xylulose 5-phosphate reductoisomerase">
    <location>
        <begin position="1"/>
        <end position="398"/>
    </location>
</feature>
<feature type="binding site" evidence="1">
    <location>
        <position position="10"/>
    </location>
    <ligand>
        <name>NADPH</name>
        <dbReference type="ChEBI" id="CHEBI:57783"/>
    </ligand>
</feature>
<feature type="binding site" evidence="1">
    <location>
        <position position="11"/>
    </location>
    <ligand>
        <name>NADPH</name>
        <dbReference type="ChEBI" id="CHEBI:57783"/>
    </ligand>
</feature>
<feature type="binding site" evidence="1">
    <location>
        <position position="12"/>
    </location>
    <ligand>
        <name>NADPH</name>
        <dbReference type="ChEBI" id="CHEBI:57783"/>
    </ligand>
</feature>
<feature type="binding site" evidence="1">
    <location>
        <position position="13"/>
    </location>
    <ligand>
        <name>NADPH</name>
        <dbReference type="ChEBI" id="CHEBI:57783"/>
    </ligand>
</feature>
<feature type="binding site" evidence="1">
    <location>
        <position position="36"/>
    </location>
    <ligand>
        <name>NADPH</name>
        <dbReference type="ChEBI" id="CHEBI:57783"/>
    </ligand>
</feature>
<feature type="binding site" evidence="1">
    <location>
        <position position="38"/>
    </location>
    <ligand>
        <name>NADPH</name>
        <dbReference type="ChEBI" id="CHEBI:57783"/>
    </ligand>
</feature>
<feature type="binding site" evidence="1">
    <location>
        <position position="124"/>
    </location>
    <ligand>
        <name>NADPH</name>
        <dbReference type="ChEBI" id="CHEBI:57783"/>
    </ligand>
</feature>
<feature type="binding site" evidence="1">
    <location>
        <position position="125"/>
    </location>
    <ligand>
        <name>1-deoxy-D-xylulose 5-phosphate</name>
        <dbReference type="ChEBI" id="CHEBI:57792"/>
    </ligand>
</feature>
<feature type="binding site" evidence="1">
    <location>
        <position position="126"/>
    </location>
    <ligand>
        <name>NADPH</name>
        <dbReference type="ChEBI" id="CHEBI:57783"/>
    </ligand>
</feature>
<feature type="binding site" evidence="1">
    <location>
        <position position="150"/>
    </location>
    <ligand>
        <name>Mn(2+)</name>
        <dbReference type="ChEBI" id="CHEBI:29035"/>
    </ligand>
</feature>
<feature type="binding site" evidence="1">
    <location>
        <position position="151"/>
    </location>
    <ligand>
        <name>1-deoxy-D-xylulose 5-phosphate</name>
        <dbReference type="ChEBI" id="CHEBI:57792"/>
    </ligand>
</feature>
<feature type="binding site" evidence="1">
    <location>
        <position position="152"/>
    </location>
    <ligand>
        <name>1-deoxy-D-xylulose 5-phosphate</name>
        <dbReference type="ChEBI" id="CHEBI:57792"/>
    </ligand>
</feature>
<feature type="binding site" evidence="1">
    <location>
        <position position="152"/>
    </location>
    <ligand>
        <name>Mn(2+)</name>
        <dbReference type="ChEBI" id="CHEBI:29035"/>
    </ligand>
</feature>
<feature type="binding site" evidence="1">
    <location>
        <position position="186"/>
    </location>
    <ligand>
        <name>1-deoxy-D-xylulose 5-phosphate</name>
        <dbReference type="ChEBI" id="CHEBI:57792"/>
    </ligand>
</feature>
<feature type="binding site" evidence="1">
    <location>
        <position position="209"/>
    </location>
    <ligand>
        <name>1-deoxy-D-xylulose 5-phosphate</name>
        <dbReference type="ChEBI" id="CHEBI:57792"/>
    </ligand>
</feature>
<feature type="binding site" evidence="1">
    <location>
        <position position="215"/>
    </location>
    <ligand>
        <name>NADPH</name>
        <dbReference type="ChEBI" id="CHEBI:57783"/>
    </ligand>
</feature>
<feature type="binding site" evidence="1">
    <location>
        <position position="222"/>
    </location>
    <ligand>
        <name>1-deoxy-D-xylulose 5-phosphate</name>
        <dbReference type="ChEBI" id="CHEBI:57792"/>
    </ligand>
</feature>
<feature type="binding site" evidence="1">
    <location>
        <position position="227"/>
    </location>
    <ligand>
        <name>1-deoxy-D-xylulose 5-phosphate</name>
        <dbReference type="ChEBI" id="CHEBI:57792"/>
    </ligand>
</feature>
<feature type="binding site" evidence="1">
    <location>
        <position position="228"/>
    </location>
    <ligand>
        <name>1-deoxy-D-xylulose 5-phosphate</name>
        <dbReference type="ChEBI" id="CHEBI:57792"/>
    </ligand>
</feature>
<feature type="binding site" evidence="1">
    <location>
        <position position="231"/>
    </location>
    <ligand>
        <name>1-deoxy-D-xylulose 5-phosphate</name>
        <dbReference type="ChEBI" id="CHEBI:57792"/>
    </ligand>
</feature>
<feature type="binding site" evidence="1">
    <location>
        <position position="231"/>
    </location>
    <ligand>
        <name>Mn(2+)</name>
        <dbReference type="ChEBI" id="CHEBI:29035"/>
    </ligand>
</feature>